<reference key="1">
    <citation type="submission" date="2007-03" db="EMBL/GenBank/DDBJ databases">
        <title>The NIAID influenza genome sequencing project.</title>
        <authorList>
            <person name="Ghedin E."/>
            <person name="Spiro D."/>
            <person name="Miller N."/>
            <person name="Zaborsky J."/>
            <person name="Feldblyum T."/>
            <person name="Subbu V."/>
            <person name="Shumway M."/>
            <person name="Sparenborg J."/>
            <person name="Groveman L."/>
            <person name="Halpin R."/>
            <person name="Sitz J."/>
            <person name="Koo H."/>
            <person name="Salzberg S.L."/>
            <person name="Webster R.G."/>
            <person name="Hoffmann E."/>
            <person name="Krauss S."/>
            <person name="Naeve C."/>
            <person name="Bao Y."/>
            <person name="Bolotov P."/>
            <person name="Dernovoy D."/>
            <person name="Kiryutin B."/>
            <person name="Lipman D.J."/>
            <person name="Tatusova T."/>
        </authorList>
    </citation>
    <scope>NUCLEOTIDE SEQUENCE [GENOMIC RNA]</scope>
</reference>
<reference key="2">
    <citation type="submission" date="2007-03" db="EMBL/GenBank/DDBJ databases">
        <authorList>
            <consortium name="The NIAID Influenza Genome Sequencing Consortium"/>
        </authorList>
    </citation>
    <scope>NUCLEOTIDE SEQUENCE [GENOMIC RNA]</scope>
</reference>
<gene>
    <name evidence="2" type="primary">PA</name>
</gene>
<sequence>MEDFVRQCFNPMIVELAEKAMKEYGENLKIETNKFAAICTHLEVCFMYSDFHFINEQGESIIVELDDPNALLKHRFEIIEGRDRTMAWTVVNSICNTTGAEKPKFLPDLYDYKENRFIEIGVTRREVHIYYLEKANKIKSEKTHIHIFSFTGEEMATKADYTLDEESRARIKTRLFTIRQEMASRGLWDSFRQSERGEETIEERFEITGTMRRLADQSLPPNFSCLENFRAYVDGFEPNGYIEGKLSQMSKEVNARIEPFLKTTPRPIRLPDGPPCSQRSKFLLMDALKLSIEDPSHEGEGIPLYDAIKCMRTFFGWKEPYVVKPHEKGINPNYLLSWKQVLAELQDIENEEKIPRTKNMKKTSQLKWALGENMAPEKVDFDDCKDISDLKQYDSDEPELRSLSSWIQNEFNKACELTDSIWIELDEIGEDVAPIEHIASMRRNYFTAEVSHCRATEYIMKGVYINTALLNASCAAMDDFQLIPMISKCRTKEGRRKTNLYGFIIKGRSHLRNDTDVVNFVSMEFSLTDPRLEPHKWEKYCVLEIGDMLLRSAIGQVSRPMFLYVRTNGTSKIKMKWGMEMRRCLLQSLQQIESMIEAESSVKEKDMTKEFFENKSETWPIGESPKGVEEGSIGKVCRTLLAKSVFNSLYASPQLEGFSAESRKLLLIVQALRDNLEPGTFDLGGLYEAIEECLINDPWVLLNASWFNSFLTHALR</sequence>
<organismHost>
    <name type="scientific">Aves</name>
    <dbReference type="NCBI Taxonomy" id="8782"/>
</organismHost>
<organismHost>
    <name type="scientific">Homo sapiens</name>
    <name type="common">Human</name>
    <dbReference type="NCBI Taxonomy" id="9606"/>
</organismHost>
<organismHost>
    <name type="scientific">Sus scrofa</name>
    <name type="common">Pig</name>
    <dbReference type="NCBI Taxonomy" id="9823"/>
</organismHost>
<comment type="function">
    <text evidence="2">Plays an essential role in viral RNA transcription and replication by forming the heterotrimeric polymerase complex together with PB1 and PB2 subunits. The complex transcribes viral mRNAs by using a unique mechanism called cap-snatching. It consists in the hijacking and cleavage of host capped pre-mRNAs. These short capped RNAs are then used as primers for viral mRNAs. The PB2 subunit is responsible for the binding of the 5' cap of cellular pre-mRNAs which are subsequently cleaved after 10-13 nucleotides by the PA subunit that carries the endonuclease activity.</text>
</comment>
<comment type="cofactor">
    <cofactor evidence="2">
        <name>Mn(2+)</name>
        <dbReference type="ChEBI" id="CHEBI:29035"/>
    </cofactor>
    <text evidence="2">Binds 2 manganese ions per subunit.</text>
</comment>
<comment type="subunit">
    <text evidence="1 2">Influenza RNA polymerase is composed of three subunits: PB1, PB2 and PA. Interacts (via C-terminus) with PB1 (via N-terminus).</text>
</comment>
<comment type="subcellular location">
    <subcellularLocation>
        <location evidence="2">Host cytoplasm</location>
    </subcellularLocation>
    <subcellularLocation>
        <location evidence="2">Host nucleus</location>
    </subcellularLocation>
    <text evidence="1 2">PB1 and PA are transported in the host nucleus as a complex.</text>
</comment>
<comment type="alternative products">
    <event type="ribosomal frameshifting"/>
    <isoform>
        <id>A4K150-1</id>
        <name>PA</name>
        <sequence type="displayed"/>
    </isoform>
    <isoform>
        <id>P0DJS7-1</id>
        <name>PA-X</name>
        <sequence type="external"/>
    </isoform>
</comment>
<comment type="PTM">
    <text evidence="1 2">Phosphorylated on serines and threonines by host kinases, including human casein kinase II.</text>
</comment>
<comment type="similarity">
    <text evidence="2">Belongs to the influenza viruses PA family.</text>
</comment>
<protein>
    <recommendedName>
        <fullName evidence="2">Polymerase acidic protein</fullName>
        <ecNumber evidence="2">3.1.-.-</ecNumber>
    </recommendedName>
    <alternativeName>
        <fullName evidence="2">RNA-directed RNA polymerase subunit P2</fullName>
    </alternativeName>
</protein>
<feature type="chain" id="PRO_0000373002" description="Polymerase acidic protein">
    <location>
        <begin position="1"/>
        <end position="716"/>
    </location>
</feature>
<feature type="short sequence motif" description="Nuclear localization signal 1 (NLS1)" evidence="1 2">
    <location>
        <begin position="124"/>
        <end position="139"/>
    </location>
</feature>
<feature type="short sequence motif" description="Nuclear localization signal 2 (NLS2)" evidence="1 2">
    <location>
        <begin position="184"/>
        <end position="247"/>
    </location>
</feature>
<feature type="binding site" evidence="2">
    <location>
        <position position="41"/>
    </location>
    <ligand>
        <name>Mn(2+)</name>
        <dbReference type="ChEBI" id="CHEBI:29035"/>
        <label>1</label>
    </ligand>
</feature>
<feature type="binding site" evidence="2">
    <location>
        <position position="80"/>
    </location>
    <ligand>
        <name>Mn(2+)</name>
        <dbReference type="ChEBI" id="CHEBI:29035"/>
        <label>2</label>
    </ligand>
</feature>
<feature type="binding site" evidence="2">
    <location>
        <position position="108"/>
    </location>
    <ligand>
        <name>Mn(2+)</name>
        <dbReference type="ChEBI" id="CHEBI:29035"/>
        <label>1</label>
    </ligand>
</feature>
<feature type="binding site" evidence="2">
    <location>
        <position position="108"/>
    </location>
    <ligand>
        <name>Mn(2+)</name>
        <dbReference type="ChEBI" id="CHEBI:29035"/>
        <label>2</label>
    </ligand>
</feature>
<feature type="binding site" evidence="2">
    <location>
        <position position="119"/>
    </location>
    <ligand>
        <name>Mn(2+)</name>
        <dbReference type="ChEBI" id="CHEBI:29035"/>
        <label>1</label>
    </ligand>
</feature>
<feature type="binding site" evidence="2">
    <location>
        <position position="120"/>
    </location>
    <ligand>
        <name>Mn(2+)</name>
        <dbReference type="ChEBI" id="CHEBI:29035"/>
        <label>1</label>
    </ligand>
</feature>
<evidence type="ECO:0000250" key="1">
    <source>
        <dbReference type="UniProtKB" id="P03433"/>
    </source>
</evidence>
<evidence type="ECO:0000255" key="2">
    <source>
        <dbReference type="HAMAP-Rule" id="MF_04063"/>
    </source>
</evidence>
<keyword id="KW-1157">Cap snatching</keyword>
<keyword id="KW-0255">Endonuclease</keyword>
<keyword id="KW-1262">Eukaryotic host gene expression shutoff by virus</keyword>
<keyword id="KW-1191">Eukaryotic host transcription shutoff by virus</keyword>
<keyword id="KW-1035">Host cytoplasm</keyword>
<keyword id="KW-1190">Host gene expression shutoff by virus</keyword>
<keyword id="KW-1048">Host nucleus</keyword>
<keyword id="KW-0945">Host-virus interaction</keyword>
<keyword id="KW-0378">Hydrolase</keyword>
<keyword id="KW-1104">Inhibition of host RNA polymerase II by virus</keyword>
<keyword id="KW-0464">Manganese</keyword>
<keyword id="KW-0479">Metal-binding</keyword>
<keyword id="KW-0540">Nuclease</keyword>
<keyword id="KW-0597">Phosphoprotein</keyword>
<keyword id="KW-0688">Ribosomal frameshifting</keyword>
<proteinExistence type="inferred from homology"/>
<accession>A4K150</accession>
<name>PA_I54A2</name>
<organism>
    <name type="scientific">Influenza A virus (strain A/Malaysia:Malaya/302/1954 H1N1)</name>
    <dbReference type="NCBI Taxonomy" id="425566"/>
    <lineage>
        <taxon>Viruses</taxon>
        <taxon>Riboviria</taxon>
        <taxon>Orthornavirae</taxon>
        <taxon>Negarnaviricota</taxon>
        <taxon>Polyploviricotina</taxon>
        <taxon>Insthoviricetes</taxon>
        <taxon>Articulavirales</taxon>
        <taxon>Orthomyxoviridae</taxon>
        <taxon>Alphainfluenzavirus</taxon>
        <taxon>Alphainfluenzavirus influenzae</taxon>
        <taxon>Influenza A virus</taxon>
    </lineage>
</organism>
<dbReference type="EC" id="3.1.-.-" evidence="2"/>
<dbReference type="EMBL" id="CY021058">
    <property type="protein sequence ID" value="ABO52287.1"/>
    <property type="molecule type" value="Viral_cRNA"/>
</dbReference>
<dbReference type="SMR" id="A4K150"/>
<dbReference type="MEROPS" id="S62.001"/>
<dbReference type="Proteomes" id="UP000008219">
    <property type="component" value="Genome"/>
</dbReference>
<dbReference type="GO" id="GO:0030430">
    <property type="term" value="C:host cell cytoplasm"/>
    <property type="evidence" value="ECO:0007669"/>
    <property type="project" value="UniProtKB-SubCell"/>
</dbReference>
<dbReference type="GO" id="GO:0042025">
    <property type="term" value="C:host cell nucleus"/>
    <property type="evidence" value="ECO:0007669"/>
    <property type="project" value="UniProtKB-SubCell"/>
</dbReference>
<dbReference type="GO" id="GO:0004519">
    <property type="term" value="F:endonuclease activity"/>
    <property type="evidence" value="ECO:0007669"/>
    <property type="project" value="UniProtKB-KW"/>
</dbReference>
<dbReference type="GO" id="GO:0046872">
    <property type="term" value="F:metal ion binding"/>
    <property type="evidence" value="ECO:0007669"/>
    <property type="project" value="UniProtKB-KW"/>
</dbReference>
<dbReference type="GO" id="GO:0003723">
    <property type="term" value="F:RNA binding"/>
    <property type="evidence" value="ECO:0007669"/>
    <property type="project" value="UniProtKB-UniRule"/>
</dbReference>
<dbReference type="GO" id="GO:0075526">
    <property type="term" value="P:cap snatching"/>
    <property type="evidence" value="ECO:0007669"/>
    <property type="project" value="UniProtKB-UniRule"/>
</dbReference>
<dbReference type="GO" id="GO:0006351">
    <property type="term" value="P:DNA-templated transcription"/>
    <property type="evidence" value="ECO:0007669"/>
    <property type="project" value="UniProtKB-UniRule"/>
</dbReference>
<dbReference type="GO" id="GO:0039657">
    <property type="term" value="P:symbiont-mediated suppression of host gene expression"/>
    <property type="evidence" value="ECO:0007669"/>
    <property type="project" value="UniProtKB-KW"/>
</dbReference>
<dbReference type="GO" id="GO:0039523">
    <property type="term" value="P:symbiont-mediated suppression of host mRNA transcription via inhibition of RNA polymerase II activity"/>
    <property type="evidence" value="ECO:0007669"/>
    <property type="project" value="UniProtKB-UniRule"/>
</dbReference>
<dbReference type="GO" id="GO:0039694">
    <property type="term" value="P:viral RNA genome replication"/>
    <property type="evidence" value="ECO:0007669"/>
    <property type="project" value="InterPro"/>
</dbReference>
<dbReference type="GO" id="GO:0075523">
    <property type="term" value="P:viral translational frameshifting"/>
    <property type="evidence" value="ECO:0007669"/>
    <property type="project" value="UniProtKB-KW"/>
</dbReference>
<dbReference type="FunFam" id="3.40.91.90:FF:000001">
    <property type="entry name" value="Polymerase acidic protein"/>
    <property type="match status" value="1"/>
</dbReference>
<dbReference type="Gene3D" id="3.40.91.90">
    <property type="entry name" value="Influenza RNA-dependent RNA polymerase subunit PA, endonuclease domain"/>
    <property type="match status" value="1"/>
</dbReference>
<dbReference type="HAMAP" id="MF_04063">
    <property type="entry name" value="INFV_PA"/>
    <property type="match status" value="1"/>
</dbReference>
<dbReference type="InterPro" id="IPR037534">
    <property type="entry name" value="INFV_PA"/>
</dbReference>
<dbReference type="InterPro" id="IPR001009">
    <property type="entry name" value="PA/PA-X"/>
</dbReference>
<dbReference type="InterPro" id="IPR038372">
    <property type="entry name" value="PA/PA-X_sf"/>
</dbReference>
<dbReference type="Pfam" id="PF00603">
    <property type="entry name" value="Flu_PA"/>
    <property type="match status" value="1"/>
</dbReference>